<dbReference type="EC" id="4.3.2.1" evidence="1"/>
<dbReference type="EMBL" id="BA000040">
    <property type="protein sequence ID" value="BAC46646.1"/>
    <property type="status" value="ALT_INIT"/>
    <property type="molecule type" value="Genomic_DNA"/>
</dbReference>
<dbReference type="RefSeq" id="NP_768021.1">
    <property type="nucleotide sequence ID" value="NC_004463.1"/>
</dbReference>
<dbReference type="RefSeq" id="WP_038965353.1">
    <property type="nucleotide sequence ID" value="NC_004463.1"/>
</dbReference>
<dbReference type="SMR" id="P59613"/>
<dbReference type="FunCoup" id="P59613">
    <property type="interactions" value="633"/>
</dbReference>
<dbReference type="STRING" id="224911.AAV28_03820"/>
<dbReference type="EnsemblBacteria" id="BAC46646">
    <property type="protein sequence ID" value="BAC46646"/>
    <property type="gene ID" value="BAC46646"/>
</dbReference>
<dbReference type="GeneID" id="46488650"/>
<dbReference type="KEGG" id="bja:blr1381"/>
<dbReference type="PATRIC" id="fig|224911.44.peg.804"/>
<dbReference type="eggNOG" id="COG0165">
    <property type="taxonomic scope" value="Bacteria"/>
</dbReference>
<dbReference type="HOGENOM" id="CLU_027272_2_3_5"/>
<dbReference type="InParanoid" id="P59613"/>
<dbReference type="OrthoDB" id="9769623at2"/>
<dbReference type="UniPathway" id="UPA00068">
    <property type="reaction ID" value="UER00114"/>
</dbReference>
<dbReference type="Proteomes" id="UP000002526">
    <property type="component" value="Chromosome"/>
</dbReference>
<dbReference type="GO" id="GO:0005829">
    <property type="term" value="C:cytosol"/>
    <property type="evidence" value="ECO:0000318"/>
    <property type="project" value="GO_Central"/>
</dbReference>
<dbReference type="GO" id="GO:0004056">
    <property type="term" value="F:argininosuccinate lyase activity"/>
    <property type="evidence" value="ECO:0000318"/>
    <property type="project" value="GO_Central"/>
</dbReference>
<dbReference type="GO" id="GO:0042450">
    <property type="term" value="P:arginine biosynthetic process via ornithine"/>
    <property type="evidence" value="ECO:0000318"/>
    <property type="project" value="GO_Central"/>
</dbReference>
<dbReference type="GO" id="GO:0006526">
    <property type="term" value="P:L-arginine biosynthetic process"/>
    <property type="evidence" value="ECO:0007669"/>
    <property type="project" value="UniProtKB-UniRule"/>
</dbReference>
<dbReference type="CDD" id="cd01359">
    <property type="entry name" value="Argininosuccinate_lyase"/>
    <property type="match status" value="1"/>
</dbReference>
<dbReference type="FunFam" id="1.10.275.10:FF:000002">
    <property type="entry name" value="Argininosuccinate lyase"/>
    <property type="match status" value="1"/>
</dbReference>
<dbReference type="FunFam" id="1.10.40.30:FF:000001">
    <property type="entry name" value="Argininosuccinate lyase"/>
    <property type="match status" value="1"/>
</dbReference>
<dbReference type="FunFam" id="1.20.200.10:FF:000015">
    <property type="entry name" value="argininosuccinate lyase isoform X2"/>
    <property type="match status" value="1"/>
</dbReference>
<dbReference type="Gene3D" id="1.10.40.30">
    <property type="entry name" value="Fumarase/aspartase (C-terminal domain)"/>
    <property type="match status" value="1"/>
</dbReference>
<dbReference type="Gene3D" id="1.20.200.10">
    <property type="entry name" value="Fumarase/aspartase (Central domain)"/>
    <property type="match status" value="1"/>
</dbReference>
<dbReference type="Gene3D" id="1.10.275.10">
    <property type="entry name" value="Fumarase/aspartase (N-terminal domain)"/>
    <property type="match status" value="1"/>
</dbReference>
<dbReference type="HAMAP" id="MF_00006">
    <property type="entry name" value="Arg_succ_lyase"/>
    <property type="match status" value="1"/>
</dbReference>
<dbReference type="InterPro" id="IPR029419">
    <property type="entry name" value="Arg_succ_lyase_C"/>
</dbReference>
<dbReference type="InterPro" id="IPR009049">
    <property type="entry name" value="Argininosuccinate_lyase"/>
</dbReference>
<dbReference type="InterPro" id="IPR024083">
    <property type="entry name" value="Fumarase/histidase_N"/>
</dbReference>
<dbReference type="InterPro" id="IPR020557">
    <property type="entry name" value="Fumarate_lyase_CS"/>
</dbReference>
<dbReference type="InterPro" id="IPR000362">
    <property type="entry name" value="Fumarate_lyase_fam"/>
</dbReference>
<dbReference type="InterPro" id="IPR022761">
    <property type="entry name" value="Fumarate_lyase_N"/>
</dbReference>
<dbReference type="InterPro" id="IPR008948">
    <property type="entry name" value="L-Aspartase-like"/>
</dbReference>
<dbReference type="NCBIfam" id="TIGR00838">
    <property type="entry name" value="argH"/>
    <property type="match status" value="1"/>
</dbReference>
<dbReference type="PANTHER" id="PTHR43814">
    <property type="entry name" value="ARGININOSUCCINATE LYASE"/>
    <property type="match status" value="1"/>
</dbReference>
<dbReference type="PANTHER" id="PTHR43814:SF1">
    <property type="entry name" value="ARGININOSUCCINATE LYASE"/>
    <property type="match status" value="1"/>
</dbReference>
<dbReference type="Pfam" id="PF14698">
    <property type="entry name" value="ASL_C2"/>
    <property type="match status" value="1"/>
</dbReference>
<dbReference type="Pfam" id="PF00206">
    <property type="entry name" value="Lyase_1"/>
    <property type="match status" value="1"/>
</dbReference>
<dbReference type="PRINTS" id="PR00145">
    <property type="entry name" value="ARGSUCLYASE"/>
</dbReference>
<dbReference type="PRINTS" id="PR00149">
    <property type="entry name" value="FUMRATELYASE"/>
</dbReference>
<dbReference type="SUPFAM" id="SSF48557">
    <property type="entry name" value="L-aspartase-like"/>
    <property type="match status" value="1"/>
</dbReference>
<dbReference type="PROSITE" id="PS00163">
    <property type="entry name" value="FUMARATE_LYASES"/>
    <property type="match status" value="1"/>
</dbReference>
<evidence type="ECO:0000255" key="1">
    <source>
        <dbReference type="HAMAP-Rule" id="MF_00006"/>
    </source>
</evidence>
<evidence type="ECO:0000305" key="2"/>
<name>ARLY_BRADU</name>
<gene>
    <name evidence="1" type="primary">argH</name>
    <name type="ordered locus">blr1381</name>
</gene>
<comment type="catalytic activity">
    <reaction evidence="1">
        <text>2-(N(omega)-L-arginino)succinate = fumarate + L-arginine</text>
        <dbReference type="Rhea" id="RHEA:24020"/>
        <dbReference type="ChEBI" id="CHEBI:29806"/>
        <dbReference type="ChEBI" id="CHEBI:32682"/>
        <dbReference type="ChEBI" id="CHEBI:57472"/>
        <dbReference type="EC" id="4.3.2.1"/>
    </reaction>
</comment>
<comment type="pathway">
    <text evidence="1">Amino-acid biosynthesis; L-arginine biosynthesis; L-arginine from L-ornithine and carbamoyl phosphate: step 3/3.</text>
</comment>
<comment type="subcellular location">
    <subcellularLocation>
        <location evidence="1">Cytoplasm</location>
    </subcellularLocation>
</comment>
<comment type="similarity">
    <text evidence="1">Belongs to the lyase 1 family. Argininosuccinate lyase subfamily.</text>
</comment>
<comment type="sequence caution" evidence="2">
    <conflict type="erroneous initiation">
        <sequence resource="EMBL-CDS" id="BAC46646"/>
    </conflict>
</comment>
<accession>P59613</accession>
<reference key="1">
    <citation type="journal article" date="2002" name="DNA Res.">
        <title>Complete genomic sequence of nitrogen-fixing symbiotic bacterium Bradyrhizobium japonicum USDA110.</title>
        <authorList>
            <person name="Kaneko T."/>
            <person name="Nakamura Y."/>
            <person name="Sato S."/>
            <person name="Minamisawa K."/>
            <person name="Uchiumi T."/>
            <person name="Sasamoto S."/>
            <person name="Watanabe A."/>
            <person name="Idesawa K."/>
            <person name="Iriguchi M."/>
            <person name="Kawashima K."/>
            <person name="Kohara M."/>
            <person name="Matsumoto M."/>
            <person name="Shimpo S."/>
            <person name="Tsuruoka H."/>
            <person name="Wada T."/>
            <person name="Yamada M."/>
            <person name="Tabata S."/>
        </authorList>
    </citation>
    <scope>NUCLEOTIDE SEQUENCE [LARGE SCALE GENOMIC DNA]</scope>
    <source>
        <strain>JCM 10833 / BCRC 13528 / IAM 13628 / NBRC 14792 / USDA 110</strain>
    </source>
</reference>
<sequence>MSNKMWGGRFSERPDEIMEEINVSIDVDRHLYAQDIAASKAHAAMLATQGIITASDAKNIGKGLDTILSEIGKGGFTFKRALEDIHMNVESRLSELIGPAAGRLHTARSRNDQVATDFRLYVRDVIDETDAALAAFQQALVARALEHAGTVMPGFTHLQTAQPVTFGHHLLAYVEMAARDRGRFQDARKRLNESPLGAAALAGTSFPIDRHATAKALLFDRPMANSLDAVSDRDFVLETLSAASICAVHMSRFAEEIVIWTSPLVGLIRLSDKFTTGSSIMPQKRNPDAAELVRAKTGRVIGALNGLLIVMKGLPLAYQKDMQEDKQGAMEGFAALSLAIRAMTGMVRDLAPDEAKMKAAAGEGYATATDLADWLVRTLKMPFREAHHVTGRIVAKAAEGGVALHELPLKEMQAIEPRITKDVLGVLSVESSVKSRTSFGGTAPKNVASQAKSWAKRLEKERKLG</sequence>
<feature type="chain" id="PRO_0000137745" description="Argininosuccinate lyase">
    <location>
        <begin position="1"/>
        <end position="465"/>
    </location>
</feature>
<keyword id="KW-0028">Amino-acid biosynthesis</keyword>
<keyword id="KW-0055">Arginine biosynthesis</keyword>
<keyword id="KW-0963">Cytoplasm</keyword>
<keyword id="KW-0456">Lyase</keyword>
<keyword id="KW-1185">Reference proteome</keyword>
<proteinExistence type="inferred from homology"/>
<organism>
    <name type="scientific">Bradyrhizobium diazoefficiens (strain JCM 10833 / BCRC 13528 / IAM 13628 / NBRC 14792 / USDA 110)</name>
    <dbReference type="NCBI Taxonomy" id="224911"/>
    <lineage>
        <taxon>Bacteria</taxon>
        <taxon>Pseudomonadati</taxon>
        <taxon>Pseudomonadota</taxon>
        <taxon>Alphaproteobacteria</taxon>
        <taxon>Hyphomicrobiales</taxon>
        <taxon>Nitrobacteraceae</taxon>
        <taxon>Bradyrhizobium</taxon>
    </lineage>
</organism>
<protein>
    <recommendedName>
        <fullName evidence="1">Argininosuccinate lyase</fullName>
        <shortName evidence="1">ASAL</shortName>
        <ecNumber evidence="1">4.3.2.1</ecNumber>
    </recommendedName>
    <alternativeName>
        <fullName evidence="1">Arginosuccinase</fullName>
    </alternativeName>
</protein>